<proteinExistence type="evidence at protein level"/>
<name>NPRL2_DROME</name>
<gene>
    <name evidence="8" type="primary">Nprl2</name>
    <name evidence="8" type="ORF">CG9104</name>
</gene>
<keyword id="KW-0131">Cell cycle</keyword>
<keyword id="KW-0132">Cell division</keyword>
<keyword id="KW-0963">Cytoplasm</keyword>
<keyword id="KW-0458">Lysosome</keyword>
<keyword id="KW-0469">Meiosis</keyword>
<keyword id="KW-0498">Mitosis</keyword>
<keyword id="KW-1185">Reference proteome</keyword>
<evidence type="ECO:0000269" key="1">
    <source>
    </source>
</evidence>
<evidence type="ECO:0000269" key="2">
    <source>
    </source>
</evidence>
<evidence type="ECO:0000269" key="3">
    <source>
    </source>
</evidence>
<evidence type="ECO:0000269" key="4">
    <source>
    </source>
</evidence>
<evidence type="ECO:0000269" key="5">
    <source>
    </source>
</evidence>
<evidence type="ECO:0000305" key="6"/>
<evidence type="ECO:0000312" key="7">
    <source>
        <dbReference type="EMBL" id="AAK93338.1"/>
    </source>
</evidence>
<evidence type="ECO:0000312" key="8">
    <source>
        <dbReference type="FlyBase" id="FBgn0030800"/>
    </source>
</evidence>
<evidence type="ECO:0000312" key="9">
    <source>
        <dbReference type="Proteomes" id="UP000000803"/>
    </source>
</evidence>
<organism>
    <name type="scientific">Drosophila melanogaster</name>
    <name type="common">Fruit fly</name>
    <dbReference type="NCBI Taxonomy" id="7227"/>
    <lineage>
        <taxon>Eukaryota</taxon>
        <taxon>Metazoa</taxon>
        <taxon>Ecdysozoa</taxon>
        <taxon>Arthropoda</taxon>
        <taxon>Hexapoda</taxon>
        <taxon>Insecta</taxon>
        <taxon>Pterygota</taxon>
        <taxon>Neoptera</taxon>
        <taxon>Endopterygota</taxon>
        <taxon>Diptera</taxon>
        <taxon>Brachycera</taxon>
        <taxon>Muscomorpha</taxon>
        <taxon>Ephydroidea</taxon>
        <taxon>Drosophilidae</taxon>
        <taxon>Drosophila</taxon>
        <taxon>Sophophora</taxon>
    </lineage>
</organism>
<sequence length="412" mass="46345">MHSHTNETAATSTTAGAVTNGAGGSGAGAAGAHGSTEGKIRCIFLSEFHATAGCKISCQVPDNYISKDVFDAINVYIIPKQHLQRCILTVNAMDVKIVGYPVGIQDQQKYARNAFLFNLCFVCDSRARSVQYEPVVKKLSEYLIMMEEESCFLSREDDKRRLQNIFETVLRDLNERKVATIVEGDNTIYLKIVMHKPDPPPVKDHMVPLLLANLRDAPLDNWDLTTQQILPYINGINHVARIAAEADVETDLVKSCIQNLVYYGVVQLLPILKYSNVYMTQNLKHLIQSASLSGACRKYVALRPDKTLPSVQRIFQFYASMTHGVTLRAICQRLCPQHHNIDERRMVIFGLQHRFIRCIHKYPVFTGSVPSGRQKMYTGLISFDEICCKTGLSPCTIERDIEKDTNVTVIWK</sequence>
<reference evidence="9" key="1">
    <citation type="journal article" date="2000" name="Science">
        <title>The genome sequence of Drosophila melanogaster.</title>
        <authorList>
            <person name="Adams M.D."/>
            <person name="Celniker S.E."/>
            <person name="Holt R.A."/>
            <person name="Evans C.A."/>
            <person name="Gocayne J.D."/>
            <person name="Amanatides P.G."/>
            <person name="Scherer S.E."/>
            <person name="Li P.W."/>
            <person name="Hoskins R.A."/>
            <person name="Galle R.F."/>
            <person name="George R.A."/>
            <person name="Lewis S.E."/>
            <person name="Richards S."/>
            <person name="Ashburner M."/>
            <person name="Henderson S.N."/>
            <person name="Sutton G.G."/>
            <person name="Wortman J.R."/>
            <person name="Yandell M.D."/>
            <person name="Zhang Q."/>
            <person name="Chen L.X."/>
            <person name="Brandon R.C."/>
            <person name="Rogers Y.-H.C."/>
            <person name="Blazej R.G."/>
            <person name="Champe M."/>
            <person name="Pfeiffer B.D."/>
            <person name="Wan K.H."/>
            <person name="Doyle C."/>
            <person name="Baxter E.G."/>
            <person name="Helt G."/>
            <person name="Nelson C.R."/>
            <person name="Miklos G.L.G."/>
            <person name="Abril J.F."/>
            <person name="Agbayani A."/>
            <person name="An H.-J."/>
            <person name="Andrews-Pfannkoch C."/>
            <person name="Baldwin D."/>
            <person name="Ballew R.M."/>
            <person name="Basu A."/>
            <person name="Baxendale J."/>
            <person name="Bayraktaroglu L."/>
            <person name="Beasley E.M."/>
            <person name="Beeson K.Y."/>
            <person name="Benos P.V."/>
            <person name="Berman B.P."/>
            <person name="Bhandari D."/>
            <person name="Bolshakov S."/>
            <person name="Borkova D."/>
            <person name="Botchan M.R."/>
            <person name="Bouck J."/>
            <person name="Brokstein P."/>
            <person name="Brottier P."/>
            <person name="Burtis K.C."/>
            <person name="Busam D.A."/>
            <person name="Butler H."/>
            <person name="Cadieu E."/>
            <person name="Center A."/>
            <person name="Chandra I."/>
            <person name="Cherry J.M."/>
            <person name="Cawley S."/>
            <person name="Dahlke C."/>
            <person name="Davenport L.B."/>
            <person name="Davies P."/>
            <person name="de Pablos B."/>
            <person name="Delcher A."/>
            <person name="Deng Z."/>
            <person name="Mays A.D."/>
            <person name="Dew I."/>
            <person name="Dietz S.M."/>
            <person name="Dodson K."/>
            <person name="Doup L.E."/>
            <person name="Downes M."/>
            <person name="Dugan-Rocha S."/>
            <person name="Dunkov B.C."/>
            <person name="Dunn P."/>
            <person name="Durbin K.J."/>
            <person name="Evangelista C.C."/>
            <person name="Ferraz C."/>
            <person name="Ferriera S."/>
            <person name="Fleischmann W."/>
            <person name="Fosler C."/>
            <person name="Gabrielian A.E."/>
            <person name="Garg N.S."/>
            <person name="Gelbart W.M."/>
            <person name="Glasser K."/>
            <person name="Glodek A."/>
            <person name="Gong F."/>
            <person name="Gorrell J.H."/>
            <person name="Gu Z."/>
            <person name="Guan P."/>
            <person name="Harris M."/>
            <person name="Harris N.L."/>
            <person name="Harvey D.A."/>
            <person name="Heiman T.J."/>
            <person name="Hernandez J.R."/>
            <person name="Houck J."/>
            <person name="Hostin D."/>
            <person name="Houston K.A."/>
            <person name="Howland T.J."/>
            <person name="Wei M.-H."/>
            <person name="Ibegwam C."/>
            <person name="Jalali M."/>
            <person name="Kalush F."/>
            <person name="Karpen G.H."/>
            <person name="Ke Z."/>
            <person name="Kennison J.A."/>
            <person name="Ketchum K.A."/>
            <person name="Kimmel B.E."/>
            <person name="Kodira C.D."/>
            <person name="Kraft C.L."/>
            <person name="Kravitz S."/>
            <person name="Kulp D."/>
            <person name="Lai Z."/>
            <person name="Lasko P."/>
            <person name="Lei Y."/>
            <person name="Levitsky A.A."/>
            <person name="Li J.H."/>
            <person name="Li Z."/>
            <person name="Liang Y."/>
            <person name="Lin X."/>
            <person name="Liu X."/>
            <person name="Mattei B."/>
            <person name="McIntosh T.C."/>
            <person name="McLeod M.P."/>
            <person name="McPherson D."/>
            <person name="Merkulov G."/>
            <person name="Milshina N.V."/>
            <person name="Mobarry C."/>
            <person name="Morris J."/>
            <person name="Moshrefi A."/>
            <person name="Mount S.M."/>
            <person name="Moy M."/>
            <person name="Murphy B."/>
            <person name="Murphy L."/>
            <person name="Muzny D.M."/>
            <person name="Nelson D.L."/>
            <person name="Nelson D.R."/>
            <person name="Nelson K.A."/>
            <person name="Nixon K."/>
            <person name="Nusskern D.R."/>
            <person name="Pacleb J.M."/>
            <person name="Palazzolo M."/>
            <person name="Pittman G.S."/>
            <person name="Pan S."/>
            <person name="Pollard J."/>
            <person name="Puri V."/>
            <person name="Reese M.G."/>
            <person name="Reinert K."/>
            <person name="Remington K."/>
            <person name="Saunders R.D.C."/>
            <person name="Scheeler F."/>
            <person name="Shen H."/>
            <person name="Shue B.C."/>
            <person name="Siden-Kiamos I."/>
            <person name="Simpson M."/>
            <person name="Skupski M.P."/>
            <person name="Smith T.J."/>
            <person name="Spier E."/>
            <person name="Spradling A.C."/>
            <person name="Stapleton M."/>
            <person name="Strong R."/>
            <person name="Sun E."/>
            <person name="Svirskas R."/>
            <person name="Tector C."/>
            <person name="Turner R."/>
            <person name="Venter E."/>
            <person name="Wang A.H."/>
            <person name="Wang X."/>
            <person name="Wang Z.-Y."/>
            <person name="Wassarman D.A."/>
            <person name="Weinstock G.M."/>
            <person name="Weissenbach J."/>
            <person name="Williams S.M."/>
            <person name="Woodage T."/>
            <person name="Worley K.C."/>
            <person name="Wu D."/>
            <person name="Yang S."/>
            <person name="Yao Q.A."/>
            <person name="Ye J."/>
            <person name="Yeh R.-F."/>
            <person name="Zaveri J.S."/>
            <person name="Zhan M."/>
            <person name="Zhang G."/>
            <person name="Zhao Q."/>
            <person name="Zheng L."/>
            <person name="Zheng X.H."/>
            <person name="Zhong F.N."/>
            <person name="Zhong W."/>
            <person name="Zhou X."/>
            <person name="Zhu S.C."/>
            <person name="Zhu X."/>
            <person name="Smith H.O."/>
            <person name="Gibbs R.A."/>
            <person name="Myers E.W."/>
            <person name="Rubin G.M."/>
            <person name="Venter J.C."/>
        </authorList>
    </citation>
    <scope>NUCLEOTIDE SEQUENCE [LARGE SCALE GENOMIC DNA]</scope>
    <source>
        <strain evidence="9">Berkeley</strain>
    </source>
</reference>
<reference evidence="9" key="2">
    <citation type="journal article" date="2002" name="Genome Biol.">
        <title>Annotation of the Drosophila melanogaster euchromatic genome: a systematic review.</title>
        <authorList>
            <person name="Misra S."/>
            <person name="Crosby M.A."/>
            <person name="Mungall C.J."/>
            <person name="Matthews B.B."/>
            <person name="Campbell K.S."/>
            <person name="Hradecky P."/>
            <person name="Huang Y."/>
            <person name="Kaminker J.S."/>
            <person name="Millburn G.H."/>
            <person name="Prochnik S.E."/>
            <person name="Smith C.D."/>
            <person name="Tupy J.L."/>
            <person name="Whitfield E.J."/>
            <person name="Bayraktaroglu L."/>
            <person name="Berman B.P."/>
            <person name="Bettencourt B.R."/>
            <person name="Celniker S.E."/>
            <person name="de Grey A.D.N.J."/>
            <person name="Drysdale R.A."/>
            <person name="Harris N.L."/>
            <person name="Richter J."/>
            <person name="Russo S."/>
            <person name="Schroeder A.J."/>
            <person name="Shu S.Q."/>
            <person name="Stapleton M."/>
            <person name="Yamada C."/>
            <person name="Ashburner M."/>
            <person name="Gelbart W.M."/>
            <person name="Rubin G.M."/>
            <person name="Lewis S.E."/>
        </authorList>
    </citation>
    <scope>GENOME REANNOTATION</scope>
    <source>
        <strain evidence="9">Berkeley</strain>
    </source>
</reference>
<reference evidence="7" key="3">
    <citation type="journal article" date="2002" name="Genome Biol.">
        <title>A Drosophila full-length cDNA resource.</title>
        <authorList>
            <person name="Stapleton M."/>
            <person name="Carlson J.W."/>
            <person name="Brokstein P."/>
            <person name="Yu C."/>
            <person name="Champe M."/>
            <person name="George R.A."/>
            <person name="Guarin H."/>
            <person name="Kronmiller B."/>
            <person name="Pacleb J.M."/>
            <person name="Park S."/>
            <person name="Wan K.H."/>
            <person name="Rubin G.M."/>
            <person name="Celniker S.E."/>
        </authorList>
    </citation>
    <scope>NUCLEOTIDE SEQUENCE [LARGE SCALE MRNA]</scope>
    <source>
        <strain evidence="7">Berkeley</strain>
        <tissue evidence="7">Embryo</tissue>
    </source>
</reference>
<reference evidence="6" key="4">
    <citation type="journal article" date="2013" name="Science">
        <title>A Tumor suppressor complex with GAP activity for the Rag GTPases that signal amino acid sufficiency to mTORC1.</title>
        <authorList>
            <person name="Bar-Peled L."/>
            <person name="Chantranupong L."/>
            <person name="Cherniack A.D."/>
            <person name="Chen W.W."/>
            <person name="Ottina K.A."/>
            <person name="Grabiner B.C."/>
            <person name="Spear E.D."/>
            <person name="Carter S.L."/>
            <person name="Meyerson M."/>
            <person name="Sabatini D.M."/>
        </authorList>
    </citation>
    <scope>FUNCTION</scope>
</reference>
<reference evidence="6" key="5">
    <citation type="journal article" date="2014" name="Cell Death Differ.">
        <title>The TORC1 inhibitors Nprl2 and Nprl3 mediate an adaptive response to amino-acid starvation in Drosophila.</title>
        <authorList>
            <person name="Wei Y."/>
            <person name="Lilly M.A."/>
        </authorList>
    </citation>
    <scope>FUNCTION</scope>
    <scope>INTERACTION WITH NPRL3</scope>
    <scope>SUBCELLULAR LOCATION</scope>
    <scope>DISRUPTION PHENOTYPE</scope>
</reference>
<reference key="6">
    <citation type="journal article" date="2014" name="Proc. Natl. Acad. Sci. U.S.A.">
        <title>TORC1 regulators Iml1/GATOR1 and GATOR2 control meiotic entry and oocyte development in Drosophila.</title>
        <authorList>
            <person name="Wei Y."/>
            <person name="Reveal B."/>
            <person name="Reich J."/>
            <person name="Laursen W.J."/>
            <person name="Senger S."/>
            <person name="Akbar T."/>
            <person name="Iida-Jones T."/>
            <person name="Cai W."/>
            <person name="Jarnik M."/>
            <person name="Lilly M.A."/>
        </authorList>
    </citation>
    <scope>FUNCTION</scope>
    <scope>DISRUPTION PHENOTYPE</scope>
</reference>
<reference key="7">
    <citation type="journal article" date="2016" name="G3 (Bethesda)">
        <title>The GATOR1 Complex Regulates Metabolic Homeostasis and the Response to Nutrient Stress in Drosophila melanogaster.</title>
        <authorList>
            <person name="Wei Y."/>
            <person name="Reveal B."/>
            <person name="Cai W."/>
            <person name="Lilly M.A."/>
        </authorList>
    </citation>
    <scope>FUNCTION</scope>
    <scope>DISRUPTION PHENOTYPE</scope>
</reference>
<reference key="8">
    <citation type="journal article" date="2016" name="PLoS Genet.">
        <title>The GATOR2 component Wdr24 regulates TORC1 activity and lysosome function.</title>
        <authorList>
            <person name="Cai W."/>
            <person name="Wei Y."/>
            <person name="Jarnik M."/>
            <person name="Reich J."/>
            <person name="Lilly M.A."/>
        </authorList>
    </citation>
    <scope>FUNCTION</scope>
    <scope>IDENTIFICATION IN THE GATOR COMPLEX</scope>
</reference>
<comment type="function">
    <text evidence="1 2 3 4 5">An essential component of the GATOR subcomplex GATOR1 which functions as an inhibitor of the amino acid-sensing branch of the TORC1 signaling pathway (PubMed:23723238, PubMed:25512509, PubMed:27166823). The two GATOR subcomplexes, GATOR1 and GATOR2, regulate the TORC1 pathway in order to mediate metabolic homeostasis, female gametogenesis and the response to amino acid limitation and complete starvation (PubMed:23723238, PubMed:25512509, PubMed:27166823). The function of GATOR1 in negatively regulating the TORC1 pathway is essential for maintaining baseline levels of TORC1 activity under nutrient rich conditions, and for promoting survival during amino acid or complete starvation by inhibiting TORC1-dependent cell growth and promoting catabolic metabolism and autophagy (PubMed:23723238, PubMed:27166823). In addition, this inhibition of TORC1 is necessary to maintain female fertility under normal conditions and during periods of nutrient stress (PubMed:24786828, PubMed:25512509, PubMed:27672113). GATOR1 and GATOR2 act at different stages of oogenesis to regulate TORC1 in order to control meiotic entry and promote oocyte growth and development (PubMed:25512509). After exactly four mitotic cyst divisions, the GATOR1 complex members (Iml1, Nprl2 and Nprl3) down-regulate TORC1 to slow cellular metabolism and promote the mitotic/meiotic transition (PubMed:25512509). At later stages of oogenesis, the mio and Nup44A components of the GATOR2 complex inhibit GATOR1 and thus activate TORC1 to promote meiotic progression, and drive oocyte growth and development (PubMed:25512509).</text>
</comment>
<comment type="subunit">
    <text evidence="2 4">Component of the GATOR complex consisting of mio, Nup44A/Seh1, Im11, Nplr3, Nplr2, Wdr24, Wdr59 and Sec13 (PubMed:27166823). Within the GATOR complex, probable component of the GATOR1 subcomplex which is likely composed of Iml1, Nplr2 and Nplr3 (PubMed:27166823). Interacts with Nprl3 (PubMed:24786828).</text>
</comment>
<comment type="subcellular location">
    <subcellularLocation>
        <location evidence="2">Cytoplasm</location>
    </subcellularLocation>
    <subcellularLocation>
        <location evidence="2">Lysosome</location>
    </subcellularLocation>
    <text evidence="2">Localizes primarily to the autolysosomes during amino-acid starvation.</text>
</comment>
<comment type="disruption phenotype">
    <text evidence="2 3 5">Pupal homozygous semi-lethal (PubMed:27672113). Under nutrient-replete conditions, larvae display a significant increase in TORC1 activity and adult escapers display a small, but significant increase in body weight and a reduction in climbing (PubMed:27672113). Newly hatched males display decreased tolerance to both complete starvation and amino acid starvation, likely due to decreased triacylglyceride (TAG) storage and the inability to down-regulate TORC1 activity and activate catabolic metabolism and autophagy (PubMed:27672113). Conditional RNAi-mediated knockdown in the female germline results in a small decrease in the rate of egg production when females are provided with a protein source of wet yeast (PubMed:24786828). Females starved of amino acids for a brief period have increased numbers of degenerating young eggs and show permanent loss of fertility (PubMed:24786828). Mid-stage egg chambers are unaffected (PubMed:24786828). Double RNAi-mediated knockdown with another GATOR1 complex member Iml1 in the female germline, increases the penetrance of ovarian cysts displaying delayed mitotic exit and producing 32-cell cysts (PubMed:25512509).</text>
</comment>
<comment type="similarity">
    <text evidence="6">Belongs to the NPR2 family.</text>
</comment>
<accession>Q9VXA0</accession>
<feature type="chain" id="PRO_0000435315" description="GATOR complex protein NPRL2">
    <location>
        <begin position="1"/>
        <end position="412"/>
    </location>
</feature>
<dbReference type="EMBL" id="AE014298">
    <property type="protein sequence ID" value="AAF48677.1"/>
    <property type="molecule type" value="Genomic_DNA"/>
</dbReference>
<dbReference type="EMBL" id="AY051914">
    <property type="protein sequence ID" value="AAK93338.1"/>
    <property type="molecule type" value="mRNA"/>
</dbReference>
<dbReference type="RefSeq" id="NP_573174.1">
    <property type="nucleotide sequence ID" value="NM_132946.3"/>
</dbReference>
<dbReference type="SMR" id="Q9VXA0"/>
<dbReference type="ComplexPortal" id="CPX-2781">
    <property type="entry name" value="GATOR1 complex"/>
</dbReference>
<dbReference type="FunCoup" id="Q9VXA0">
    <property type="interactions" value="755"/>
</dbReference>
<dbReference type="IntAct" id="Q9VXA0">
    <property type="interactions" value="8"/>
</dbReference>
<dbReference type="STRING" id="7227.FBpp0074122"/>
<dbReference type="PaxDb" id="7227-FBpp0074122"/>
<dbReference type="DNASU" id="32677"/>
<dbReference type="EnsemblMetazoa" id="FBtr0074348">
    <property type="protein sequence ID" value="FBpp0074122"/>
    <property type="gene ID" value="FBgn0030800"/>
</dbReference>
<dbReference type="GeneID" id="32677"/>
<dbReference type="KEGG" id="dme:Dmel_CG9104"/>
<dbReference type="UCSC" id="CG9104-RA">
    <property type="organism name" value="d. melanogaster"/>
</dbReference>
<dbReference type="AGR" id="FB:FBgn0030800"/>
<dbReference type="CTD" id="10641"/>
<dbReference type="FlyBase" id="FBgn0030800">
    <property type="gene designation" value="Nprl2"/>
</dbReference>
<dbReference type="VEuPathDB" id="VectorBase:FBgn0030800"/>
<dbReference type="eggNOG" id="KOG3789">
    <property type="taxonomic scope" value="Eukaryota"/>
</dbReference>
<dbReference type="GeneTree" id="ENSGT00390000001414"/>
<dbReference type="HOGENOM" id="CLU_014995_0_0_1"/>
<dbReference type="InParanoid" id="Q9VXA0"/>
<dbReference type="OMA" id="IVMHKPD"/>
<dbReference type="OrthoDB" id="338854at2759"/>
<dbReference type="PhylomeDB" id="Q9VXA0"/>
<dbReference type="BioGRID-ORCS" id="32677">
    <property type="hits" value="0 hits in 1 CRISPR screen"/>
</dbReference>
<dbReference type="GenomeRNAi" id="32677"/>
<dbReference type="PRO" id="PR:Q9VXA0"/>
<dbReference type="Proteomes" id="UP000000803">
    <property type="component" value="Chromosome X"/>
</dbReference>
<dbReference type="Bgee" id="FBgn0030800">
    <property type="expression patterns" value="Expressed in oviduct (Drosophila) and 48 other cell types or tissues"/>
</dbReference>
<dbReference type="GO" id="GO:0044754">
    <property type="term" value="C:autolysosome"/>
    <property type="evidence" value="ECO:0000314"/>
    <property type="project" value="FlyBase"/>
</dbReference>
<dbReference type="GO" id="GO:0005737">
    <property type="term" value="C:cytoplasm"/>
    <property type="evidence" value="ECO:0000314"/>
    <property type="project" value="FlyBase"/>
</dbReference>
<dbReference type="GO" id="GO:1990130">
    <property type="term" value="C:GATOR1 complex"/>
    <property type="evidence" value="ECO:0000318"/>
    <property type="project" value="GO_Central"/>
</dbReference>
<dbReference type="GO" id="GO:0005634">
    <property type="term" value="C:nucleus"/>
    <property type="evidence" value="ECO:0000314"/>
    <property type="project" value="FlyBase"/>
</dbReference>
<dbReference type="GO" id="GO:0035859">
    <property type="term" value="C:Seh1-associated complex"/>
    <property type="evidence" value="ECO:0000314"/>
    <property type="project" value="FlyBase"/>
</dbReference>
<dbReference type="GO" id="GO:0005774">
    <property type="term" value="C:vacuolar membrane"/>
    <property type="evidence" value="ECO:0000318"/>
    <property type="project" value="GO_Central"/>
</dbReference>
<dbReference type="GO" id="GO:0051301">
    <property type="term" value="P:cell division"/>
    <property type="evidence" value="ECO:0007669"/>
    <property type="project" value="UniProtKB-KW"/>
</dbReference>
<dbReference type="GO" id="GO:0034198">
    <property type="term" value="P:cellular response to amino acid starvation"/>
    <property type="evidence" value="ECO:0000315"/>
    <property type="project" value="UniProtKB"/>
</dbReference>
<dbReference type="GO" id="GO:0009267">
    <property type="term" value="P:cellular response to starvation"/>
    <property type="evidence" value="ECO:0000315"/>
    <property type="project" value="FlyBase"/>
</dbReference>
<dbReference type="GO" id="GO:0007293">
    <property type="term" value="P:germarium-derived egg chamber formation"/>
    <property type="evidence" value="ECO:0000316"/>
    <property type="project" value="FlyBase"/>
</dbReference>
<dbReference type="GO" id="GO:0051729">
    <property type="term" value="P:germline cell cycle switching, mitotic to meiotic cell cycle"/>
    <property type="evidence" value="ECO:0000316"/>
    <property type="project" value="UniProtKB"/>
</dbReference>
<dbReference type="GO" id="GO:0051321">
    <property type="term" value="P:meiotic cell cycle"/>
    <property type="evidence" value="ECO:0007669"/>
    <property type="project" value="UniProtKB-KW"/>
</dbReference>
<dbReference type="GO" id="GO:0045792">
    <property type="term" value="P:negative regulation of cell size"/>
    <property type="evidence" value="ECO:0000315"/>
    <property type="project" value="FlyBase"/>
</dbReference>
<dbReference type="GO" id="GO:0032007">
    <property type="term" value="P:negative regulation of TOR signaling"/>
    <property type="evidence" value="ECO:0000315"/>
    <property type="project" value="UniProtKB"/>
</dbReference>
<dbReference type="GO" id="GO:1904262">
    <property type="term" value="P:negative regulation of TORC1 signaling"/>
    <property type="evidence" value="ECO:0000315"/>
    <property type="project" value="FlyBase"/>
</dbReference>
<dbReference type="GO" id="GO:0048477">
    <property type="term" value="P:oogenesis"/>
    <property type="evidence" value="ECO:0000315"/>
    <property type="project" value="FlyBase"/>
</dbReference>
<dbReference type="GO" id="GO:0010508">
    <property type="term" value="P:positive regulation of autophagy"/>
    <property type="evidence" value="ECO:0000318"/>
    <property type="project" value="GO_Central"/>
</dbReference>
<dbReference type="GO" id="GO:0010898">
    <property type="term" value="P:positive regulation of triglyceride catabolic process"/>
    <property type="evidence" value="ECO:0000315"/>
    <property type="project" value="FlyBase"/>
</dbReference>
<dbReference type="InterPro" id="IPR009348">
    <property type="entry name" value="NPR2-like"/>
</dbReference>
<dbReference type="PANTHER" id="PTHR12991:SF10">
    <property type="entry name" value="GATOR COMPLEX PROTEIN NPRL2"/>
    <property type="match status" value="1"/>
</dbReference>
<dbReference type="PANTHER" id="PTHR12991">
    <property type="entry name" value="NITROGEN PERMEASE REGULATOR 2/TUMOR SUPPRESSOR CANDIDATE 4"/>
    <property type="match status" value="1"/>
</dbReference>
<dbReference type="Pfam" id="PF06218">
    <property type="entry name" value="NPR2"/>
    <property type="match status" value="2"/>
</dbReference>
<protein>
    <recommendedName>
        <fullName evidence="6">GATOR complex protein NPRL2</fullName>
    </recommendedName>
    <alternativeName>
        <fullName evidence="8">Nitrogen permease regulator 2-like protein</fullName>
    </alternativeName>
</protein>